<protein>
    <recommendedName>
        <fullName evidence="5">ABC transporter riboflavin-binding protein RfuA</fullName>
    </recommendedName>
    <alternativeName>
        <fullName evidence="5">Membrane lipoprotein TpN38(b)</fullName>
    </alternativeName>
</protein>
<accession>Q56328</accession>
<gene>
    <name evidence="3" type="primary">rfuA</name>
    <name evidence="4" type="synonym">tpn38</name>
    <name type="ordered locus">TP_0298</name>
</gene>
<comment type="function">
    <text evidence="2">Probably part of the ABC transporter complex RfuABCD involved in riboflavin import. Binds riboflavin.</text>
</comment>
<comment type="subunit">
    <text evidence="2 6">Monomer in solution (PubMed:23404400). The complex is probably composed of two ATP-binding proteins (RfuB), two transmembrane proteins (RfuC and RfuD) and a solute-binding protein (RfuA) (Probable).</text>
</comment>
<comment type="subcellular location">
    <subcellularLocation>
        <location evidence="6">Cell inner membrane</location>
        <topology evidence="6">Lipid-anchor</topology>
        <orientation evidence="6">Periplasmic side</orientation>
    </subcellularLocation>
</comment>
<comment type="similarity">
    <text evidence="5">Belongs to the BMP lipoprotein family.</text>
</comment>
<keyword id="KW-0002">3D-structure</keyword>
<keyword id="KW-0997">Cell inner membrane</keyword>
<keyword id="KW-1003">Cell membrane</keyword>
<keyword id="KW-0449">Lipoprotein</keyword>
<keyword id="KW-0472">Membrane</keyword>
<keyword id="KW-0564">Palmitate</keyword>
<keyword id="KW-1185">Reference proteome</keyword>
<keyword id="KW-0732">Signal</keyword>
<keyword id="KW-0813">Transport</keyword>
<evidence type="ECO:0000255" key="1"/>
<evidence type="ECO:0000269" key="2">
    <source>
    </source>
</evidence>
<evidence type="ECO:0000303" key="3">
    <source>
    </source>
</evidence>
<evidence type="ECO:0000303" key="4">
    <source>
    </source>
</evidence>
<evidence type="ECO:0000305" key="5"/>
<evidence type="ECO:0000305" key="6">
    <source>
    </source>
</evidence>
<evidence type="ECO:0007744" key="7">
    <source>
        <dbReference type="PDB" id="4IIL"/>
    </source>
</evidence>
<evidence type="ECO:0007829" key="8">
    <source>
        <dbReference type="PDB" id="4IIL"/>
    </source>
</evidence>
<sequence>MNGAVCVLSALIAVFTCFSCRPAVQDERAVRIAVFVPGFRHDSPVYAMLCDGVERAVTQERATGRSIGLDIIEAGPNQALWREKLAHLAAEQRYRLIVSSNPALPHVLEPILRQFPLQRFLVLDAYAPQEHSLITFRYNQWEQAYLAGHLSALVSASAMRFANADKKIGLIAGQSYPVMTQTIIPAFLAGARAVDPAFEVDVRVVGNWYDAAKSADLARILFHEGVDVMMPICGGANQGVLAAARELGFYVSWFDDNGYARAPGYVVGSSVMEQERLAYEQTLRCIRGELPSAGAWTLGVKDGYVRFIEEDPLYLQTVPEPIRVRQSALLRRIQSGELTLPVR</sequence>
<proteinExistence type="evidence at protein level"/>
<dbReference type="EMBL" id="U12861">
    <property type="protein sequence ID" value="AAB02167.1"/>
    <property type="molecule type" value="Genomic_DNA"/>
</dbReference>
<dbReference type="EMBL" id="AE000520">
    <property type="protein sequence ID" value="AAC65287.1"/>
    <property type="molecule type" value="Genomic_DNA"/>
</dbReference>
<dbReference type="PIR" id="D71341">
    <property type="entry name" value="D71341"/>
</dbReference>
<dbReference type="RefSeq" id="WP_010881747.1">
    <property type="nucleotide sequence ID" value="NC_021490.2"/>
</dbReference>
<dbReference type="PDB" id="4IIL">
    <property type="method" value="X-ray"/>
    <property type="resolution" value="1.30 A"/>
    <property type="chains" value="A=21-343"/>
</dbReference>
<dbReference type="PDBsum" id="4IIL"/>
<dbReference type="SMR" id="Q56328"/>
<dbReference type="IntAct" id="Q56328">
    <property type="interactions" value="9"/>
</dbReference>
<dbReference type="STRING" id="243276.TP_0298"/>
<dbReference type="EnsemblBacteria" id="AAC65287">
    <property type="protein sequence ID" value="AAC65287"/>
    <property type="gene ID" value="TP_0298"/>
</dbReference>
<dbReference type="KEGG" id="tpa:TP_0298"/>
<dbReference type="KEGG" id="tpw:TPANIC_0298"/>
<dbReference type="eggNOG" id="COG1744">
    <property type="taxonomic scope" value="Bacteria"/>
</dbReference>
<dbReference type="HOGENOM" id="CLU_038813_0_1_12"/>
<dbReference type="OrthoDB" id="356014at2"/>
<dbReference type="EvolutionaryTrace" id="Q56328"/>
<dbReference type="Proteomes" id="UP000000811">
    <property type="component" value="Chromosome"/>
</dbReference>
<dbReference type="GO" id="GO:0005886">
    <property type="term" value="C:plasma membrane"/>
    <property type="evidence" value="ECO:0007669"/>
    <property type="project" value="UniProtKB-SubCell"/>
</dbReference>
<dbReference type="CDD" id="cd19962">
    <property type="entry name" value="PBP1_ABC_RfuA-like"/>
    <property type="match status" value="1"/>
</dbReference>
<dbReference type="Gene3D" id="3.40.50.2300">
    <property type="match status" value="2"/>
</dbReference>
<dbReference type="InterPro" id="IPR050957">
    <property type="entry name" value="BMP_lipoprotein"/>
</dbReference>
<dbReference type="InterPro" id="IPR028082">
    <property type="entry name" value="Peripla_BP_I"/>
</dbReference>
<dbReference type="InterPro" id="IPR003760">
    <property type="entry name" value="PnrA-like"/>
</dbReference>
<dbReference type="PANTHER" id="PTHR34296:SF2">
    <property type="entry name" value="ABC TRANSPORTER GUANOSINE-BINDING PROTEIN NUPN"/>
    <property type="match status" value="1"/>
</dbReference>
<dbReference type="PANTHER" id="PTHR34296">
    <property type="entry name" value="TRANSCRIPTIONAL ACTIVATOR PROTEIN MED"/>
    <property type="match status" value="1"/>
</dbReference>
<dbReference type="Pfam" id="PF02608">
    <property type="entry name" value="Bmp"/>
    <property type="match status" value="1"/>
</dbReference>
<dbReference type="SUPFAM" id="SSF53822">
    <property type="entry name" value="Periplasmic binding protein-like I"/>
    <property type="match status" value="1"/>
</dbReference>
<reference key="1">
    <citation type="journal article" date="1996" name="FEMS Microbiol. Lett.">
        <title>Expression and sequence analysis of a Treponema pallidum gene, Tpn38(b), encoding an exported protein with homology to T. pallidum and Borrelia burgdorferi proteins.</title>
        <authorList>
            <person name="Stamm L.V."/>
            <person name="Hardham J.M."/>
            <person name="Frye J.G."/>
        </authorList>
    </citation>
    <scope>NUCLEOTIDE SEQUENCE [GENOMIC DNA]</scope>
    <source>
        <strain>Nichols</strain>
    </source>
</reference>
<reference key="2">
    <citation type="journal article" date="1998" name="Science">
        <title>Complete genome sequence of Treponema pallidum, the syphilis spirochete.</title>
        <authorList>
            <person name="Fraser C.M."/>
            <person name="Norris S.J."/>
            <person name="Weinstock G.M."/>
            <person name="White O."/>
            <person name="Sutton G.G."/>
            <person name="Dodson R.J."/>
            <person name="Gwinn M.L."/>
            <person name="Hickey E.K."/>
            <person name="Clayton R.A."/>
            <person name="Ketchum K.A."/>
            <person name="Sodergren E."/>
            <person name="Hardham J.M."/>
            <person name="McLeod M.P."/>
            <person name="Salzberg S.L."/>
            <person name="Peterson J.D."/>
            <person name="Khalak H.G."/>
            <person name="Richardson D.L."/>
            <person name="Howell J.K."/>
            <person name="Chidambaram M."/>
            <person name="Utterback T.R."/>
            <person name="McDonald L.A."/>
            <person name="Artiach P."/>
            <person name="Bowman C."/>
            <person name="Cotton M.D."/>
            <person name="Fujii C."/>
            <person name="Garland S.A."/>
            <person name="Hatch B."/>
            <person name="Horst K."/>
            <person name="Roberts K.M."/>
            <person name="Sandusky M."/>
            <person name="Weidman J.F."/>
            <person name="Smith H.O."/>
            <person name="Venter J.C."/>
        </authorList>
    </citation>
    <scope>NUCLEOTIDE SEQUENCE [LARGE SCALE GENOMIC DNA]</scope>
    <source>
        <strain>Nichols</strain>
    </source>
</reference>
<reference evidence="7" key="3">
    <citation type="journal article" date="2013" name="MBio">
        <title>Evidence for an ABC-type riboflavin transporter system in pathogenic spirochetes.</title>
        <authorList>
            <person name="Deka R.K."/>
            <person name="Brautigam C.A."/>
            <person name="Biddy B.A."/>
            <person name="Liu W.Z."/>
            <person name="Norgard M.V."/>
        </authorList>
    </citation>
    <scope>X-RAY CRYSTALLOGRAPHY (1.30 ANGSTROMS) OF 21-343 IN COMPLEX WITH RIBOFLAVIN</scope>
    <scope>FUNCTION</scope>
    <scope>SUBUNIT</scope>
    <scope>SUBCELLULAR LOCATION</scope>
    <scope>PALMITOYLATION AT CYS-20</scope>
    <scope>DIACYLGLYCEROL AT CYS-20</scope>
</reference>
<feature type="signal peptide" evidence="1">
    <location>
        <begin position="1"/>
        <end position="19"/>
    </location>
</feature>
<feature type="chain" id="PRO_0000018008" description="ABC transporter riboflavin-binding protein RfuA">
    <location>
        <begin position="20"/>
        <end position="343"/>
    </location>
</feature>
<feature type="binding site" evidence="2 7">
    <location>
        <begin position="43"/>
        <end position="46"/>
    </location>
    <ligand>
        <name>riboflavin</name>
        <dbReference type="ChEBI" id="CHEBI:57986"/>
    </ligand>
</feature>
<feature type="binding site" evidence="2 7">
    <location>
        <position position="124"/>
    </location>
    <ligand>
        <name>riboflavin</name>
        <dbReference type="ChEBI" id="CHEBI:57986"/>
    </ligand>
</feature>
<feature type="binding site" evidence="2 7">
    <location>
        <position position="140"/>
    </location>
    <ligand>
        <name>riboflavin</name>
        <dbReference type="ChEBI" id="CHEBI:57986"/>
    </ligand>
</feature>
<feature type="binding site" evidence="2 7">
    <location>
        <position position="176"/>
    </location>
    <ligand>
        <name>riboflavin</name>
        <dbReference type="ChEBI" id="CHEBI:57986"/>
    </ligand>
</feature>
<feature type="binding site" evidence="2 7">
    <location>
        <position position="208"/>
    </location>
    <ligand>
        <name>riboflavin</name>
        <dbReference type="ChEBI" id="CHEBI:57986"/>
    </ligand>
</feature>
<feature type="binding site" evidence="2 7">
    <location>
        <position position="255"/>
    </location>
    <ligand>
        <name>riboflavin</name>
        <dbReference type="ChEBI" id="CHEBI:57986"/>
    </ligand>
</feature>
<feature type="lipid moiety-binding region" description="N-palmitoyl cysteine" evidence="6">
    <location>
        <position position="20"/>
    </location>
</feature>
<feature type="lipid moiety-binding region" description="S-diacylglycerol cysteine" evidence="6">
    <location>
        <position position="20"/>
    </location>
</feature>
<feature type="strand" evidence="8">
    <location>
        <begin position="30"/>
        <end position="38"/>
    </location>
</feature>
<feature type="helix" evidence="8">
    <location>
        <begin position="44"/>
        <end position="61"/>
    </location>
</feature>
<feature type="turn" evidence="8">
    <location>
        <begin position="62"/>
        <end position="64"/>
    </location>
</feature>
<feature type="strand" evidence="8">
    <location>
        <begin position="67"/>
        <end position="73"/>
    </location>
</feature>
<feature type="helix" evidence="8">
    <location>
        <begin position="78"/>
        <end position="80"/>
    </location>
</feature>
<feature type="helix" evidence="8">
    <location>
        <begin position="81"/>
        <end position="90"/>
    </location>
</feature>
<feature type="strand" evidence="8">
    <location>
        <begin position="95"/>
        <end position="101"/>
    </location>
</feature>
<feature type="helix" evidence="8">
    <location>
        <begin position="104"/>
        <end position="114"/>
    </location>
</feature>
<feature type="strand" evidence="8">
    <location>
        <begin position="120"/>
        <end position="124"/>
    </location>
</feature>
<feature type="strand" evidence="8">
    <location>
        <begin position="131"/>
        <end position="138"/>
    </location>
</feature>
<feature type="helix" evidence="8">
    <location>
        <begin position="140"/>
        <end position="156"/>
    </location>
</feature>
<feature type="strand" evidence="8">
    <location>
        <begin position="167"/>
        <end position="174"/>
    </location>
</feature>
<feature type="helix" evidence="8">
    <location>
        <begin position="177"/>
        <end position="181"/>
    </location>
</feature>
<feature type="helix" evidence="8">
    <location>
        <begin position="183"/>
        <end position="194"/>
    </location>
</feature>
<feature type="strand" evidence="8">
    <location>
        <begin position="199"/>
        <end position="204"/>
    </location>
</feature>
<feature type="strand" evidence="8">
    <location>
        <begin position="206"/>
        <end position="209"/>
    </location>
</feature>
<feature type="helix" evidence="8">
    <location>
        <begin position="211"/>
        <end position="224"/>
    </location>
</feature>
<feature type="strand" evidence="8">
    <location>
        <begin position="228"/>
        <end position="232"/>
    </location>
</feature>
<feature type="helix" evidence="8">
    <location>
        <begin position="234"/>
        <end position="236"/>
    </location>
</feature>
<feature type="helix" evidence="8">
    <location>
        <begin position="237"/>
        <end position="247"/>
    </location>
</feature>
<feature type="strand" evidence="8">
    <location>
        <begin position="250"/>
        <end position="256"/>
    </location>
</feature>
<feature type="helix" evidence="8">
    <location>
        <begin position="259"/>
        <end position="261"/>
    </location>
</feature>
<feature type="turn" evidence="8">
    <location>
        <begin position="263"/>
        <end position="265"/>
    </location>
</feature>
<feature type="strand" evidence="8">
    <location>
        <begin position="266"/>
        <end position="272"/>
    </location>
</feature>
<feature type="helix" evidence="8">
    <location>
        <begin position="274"/>
        <end position="286"/>
    </location>
</feature>
<feature type="strand" evidence="8">
    <location>
        <begin position="294"/>
        <end position="298"/>
    </location>
</feature>
<feature type="helix" evidence="8">
    <location>
        <begin position="300"/>
        <end position="302"/>
    </location>
</feature>
<feature type="strand" evidence="8">
    <location>
        <begin position="304"/>
        <end position="307"/>
    </location>
</feature>
<feature type="helix" evidence="8">
    <location>
        <begin position="312"/>
        <end position="317"/>
    </location>
</feature>
<feature type="helix" evidence="8">
    <location>
        <begin position="320"/>
        <end position="335"/>
    </location>
</feature>
<feature type="strand" evidence="8">
    <location>
        <begin position="336"/>
        <end position="338"/>
    </location>
</feature>
<name>RFUA_TREPA</name>
<organism>
    <name type="scientific">Treponema pallidum (strain Nichols)</name>
    <dbReference type="NCBI Taxonomy" id="243276"/>
    <lineage>
        <taxon>Bacteria</taxon>
        <taxon>Pseudomonadati</taxon>
        <taxon>Spirochaetota</taxon>
        <taxon>Spirochaetia</taxon>
        <taxon>Spirochaetales</taxon>
        <taxon>Treponemataceae</taxon>
        <taxon>Treponema</taxon>
    </lineage>
</organism>